<keyword id="KW-0027">Amidation</keyword>
<keyword id="KW-0878">Amphibian defense peptide</keyword>
<keyword id="KW-0044">Antibiotic</keyword>
<keyword id="KW-0929">Antimicrobial</keyword>
<keyword id="KW-0165">Cleavage on pair of basic residues</keyword>
<keyword id="KW-0295">Fungicide</keyword>
<keyword id="KW-0391">Immunity</keyword>
<keyword id="KW-0399">Innate immunity</keyword>
<keyword id="KW-0964">Secreted</keyword>
<keyword id="KW-0732">Signal</keyword>
<protein>
    <recommendedName>
        <fullName evidence="3">Temporin-ALi</fullName>
    </recommendedName>
    <alternativeName>
        <fullName evidence="6">Amolopin-2i</fullName>
    </alternativeName>
</protein>
<reference key="1">
    <citation type="journal article" date="2010" name="Comp. Biochem. Physiol.">
        <title>Five novel antimicrobial peptides from skin secretions of the frog, Amolops loloensis.</title>
        <authorList>
            <person name="Wang M."/>
            <person name="Wang Y."/>
            <person name="Wang A."/>
            <person name="Song Y."/>
            <person name="Ma D."/>
            <person name="Yang H."/>
            <person name="Ma Y."/>
            <person name="Lai R."/>
        </authorList>
    </citation>
    <scope>NUCLEOTIDE SEQUENCE [MRNA]</scope>
    <scope>FUNCTION</scope>
    <scope>AMIDATION AT LEU-59</scope>
    <scope>SYNTHESIS OF 47-59</scope>
    <source>
        <tissue>Skin</tissue>
    </source>
</reference>
<evidence type="ECO:0000255" key="1"/>
<evidence type="ECO:0000269" key="2">
    <source>
    </source>
</evidence>
<evidence type="ECO:0000303" key="3">
    <source>
    </source>
</evidence>
<evidence type="ECO:0000305" key="4"/>
<evidence type="ECO:0000305" key="5">
    <source>
    </source>
</evidence>
<evidence type="ECO:0000312" key="6">
    <source>
        <dbReference type="EMBL" id="ACA09643.1"/>
    </source>
</evidence>
<sequence>MFPLKKSLLLLFFLATINLSLCEQERNAEEERRDEPDERNAEVEKRFFPIVGKLLSGLLGK</sequence>
<organism>
    <name type="scientific">Amolops loloensis</name>
    <name type="common">Lolokou Sucker Frog</name>
    <name type="synonym">Staurois loloensis</name>
    <dbReference type="NCBI Taxonomy" id="318551"/>
    <lineage>
        <taxon>Eukaryota</taxon>
        <taxon>Metazoa</taxon>
        <taxon>Chordata</taxon>
        <taxon>Craniata</taxon>
        <taxon>Vertebrata</taxon>
        <taxon>Euteleostomi</taxon>
        <taxon>Amphibia</taxon>
        <taxon>Batrachia</taxon>
        <taxon>Anura</taxon>
        <taxon>Neobatrachia</taxon>
        <taxon>Ranoidea</taxon>
        <taxon>Ranidae</taxon>
        <taxon>Amolops</taxon>
    </lineage>
</organism>
<accession>C5H0E0</accession>
<feature type="signal peptide" evidence="1">
    <location>
        <begin position="1"/>
        <end position="22"/>
    </location>
</feature>
<feature type="propeptide" id="PRO_0000450009" evidence="5">
    <location>
        <begin position="23"/>
        <end position="46"/>
    </location>
</feature>
<feature type="peptide" id="PRO_5002950381" description="Temporin-ALi" evidence="5">
    <location>
        <begin position="47"/>
        <end position="59"/>
    </location>
</feature>
<feature type="modified residue" description="Leucine amide" evidence="5">
    <location>
        <position position="59"/>
    </location>
</feature>
<dbReference type="EMBL" id="EU311553">
    <property type="protein sequence ID" value="ACA09643.1"/>
    <property type="molecule type" value="mRNA"/>
</dbReference>
<dbReference type="GO" id="GO:0005576">
    <property type="term" value="C:extracellular region"/>
    <property type="evidence" value="ECO:0007669"/>
    <property type="project" value="UniProtKB-SubCell"/>
</dbReference>
<dbReference type="GO" id="GO:0042742">
    <property type="term" value="P:defense response to bacterium"/>
    <property type="evidence" value="ECO:0007669"/>
    <property type="project" value="UniProtKB-KW"/>
</dbReference>
<dbReference type="GO" id="GO:0050832">
    <property type="term" value="P:defense response to fungus"/>
    <property type="evidence" value="ECO:0007669"/>
    <property type="project" value="UniProtKB-KW"/>
</dbReference>
<dbReference type="GO" id="GO:0045087">
    <property type="term" value="P:innate immune response"/>
    <property type="evidence" value="ECO:0007669"/>
    <property type="project" value="UniProtKB-KW"/>
</dbReference>
<dbReference type="GO" id="GO:0031640">
    <property type="term" value="P:killing of cells of another organism"/>
    <property type="evidence" value="ECO:0007669"/>
    <property type="project" value="UniProtKB-KW"/>
</dbReference>
<dbReference type="InterPro" id="IPR004275">
    <property type="entry name" value="Frog_antimicrobial_propeptide"/>
</dbReference>
<dbReference type="Pfam" id="PF03032">
    <property type="entry name" value="FSAP_sig_propep"/>
    <property type="match status" value="1"/>
</dbReference>
<name>TPI_AMOLO</name>
<comment type="function">
    <text evidence="2">Antimicrobial peptide with activity against Gram-positive and Gram-negative bacteria and against fungi (PubMed:19843479). Has been tested against S.aureus (MIC=7.5 ug/mL), B.pumilus (MIC=7.5 ug/mL), B.cereus (MIC=75.0 ug/mL), E.coli (MIC=7.5 ug/mL), B.dysenteriae (MIC=20.0 ug/mL), A.cacoaceticus (MIC=60.0 ug/mL), P.aeruginosa (MIC=5.0 ug/mL) and C.albicans (MIC=5.0 ug/mL) (PubMed:19843479). Also shows a weak hemolytic activity (PubMed:19843479).</text>
</comment>
<comment type="subcellular location">
    <subcellularLocation>
        <location evidence="5">Secreted</location>
    </subcellularLocation>
</comment>
<comment type="tissue specificity">
    <text evidence="5">Expressed by the skin glands.</text>
</comment>
<comment type="similarity">
    <text evidence="4">Belongs to the frog skin active peptide (FSAP) family. Temporin subfamily.</text>
</comment>
<comment type="online information" name="The antimicrobial peptide database">
    <link uri="https://wangapd3.com/database/query_output.php?ID=01936"/>
</comment>
<proteinExistence type="evidence at protein level"/>